<organism>
    <name type="scientific">Delia radicum</name>
    <name type="common">Cabbage root fly</name>
    <name type="synonym">Anthomyia brassicae</name>
    <dbReference type="NCBI Taxonomy" id="30064"/>
    <lineage>
        <taxon>Eukaryota</taxon>
        <taxon>Metazoa</taxon>
        <taxon>Ecdysozoa</taxon>
        <taxon>Arthropoda</taxon>
        <taxon>Hexapoda</taxon>
        <taxon>Insecta</taxon>
        <taxon>Pterygota</taxon>
        <taxon>Neoptera</taxon>
        <taxon>Endopterygota</taxon>
        <taxon>Diptera</taxon>
        <taxon>Brachycera</taxon>
        <taxon>Muscomorpha</taxon>
        <taxon>Muscoidea</taxon>
        <taxon>Anthomyiidae</taxon>
        <taxon>Anthomyiinae</taxon>
        <taxon>Delia</taxon>
    </lineage>
</organism>
<evidence type="ECO:0000250" key="1">
    <source>
        <dbReference type="UniProtKB" id="O44314"/>
    </source>
</evidence>
<evidence type="ECO:0000250" key="2">
    <source>
        <dbReference type="UniProtKB" id="P82155"/>
    </source>
</evidence>
<evidence type="ECO:0000255" key="3"/>
<evidence type="ECO:0000269" key="4">
    <source>
    </source>
</evidence>
<evidence type="ECO:0000269" key="5">
    <source>
    </source>
</evidence>
<evidence type="ECO:0000305" key="6"/>
<protein>
    <recommendedName>
        <fullName>Allatostatin-A3</fullName>
        <shortName>AST-A3</shortName>
    </recommendedName>
    <alternativeName>
        <fullName>VERYAFGL-amide</fullName>
    </alternativeName>
</protein>
<feature type="peptide" id="PRO_0000419713" description="Allatostatin-A3">
    <location>
        <begin position="1"/>
        <end position="8"/>
    </location>
</feature>
<feature type="modified residue" description="Leucine amide" evidence="4 5">
    <location>
        <position position="8"/>
    </location>
</feature>
<feature type="unsure residue" description="L or I" evidence="5">
    <location>
        <position position="8"/>
    </location>
</feature>
<name>ALLA3_DELRA</name>
<keyword id="KW-0027">Amidation</keyword>
<keyword id="KW-0903">Direct protein sequencing</keyword>
<keyword id="KW-0527">Neuropeptide</keyword>
<keyword id="KW-0964">Secreted</keyword>
<dbReference type="GO" id="GO:0005576">
    <property type="term" value="C:extracellular region"/>
    <property type="evidence" value="ECO:0007669"/>
    <property type="project" value="UniProtKB-SubCell"/>
</dbReference>
<dbReference type="GO" id="GO:0007218">
    <property type="term" value="P:neuropeptide signaling pathway"/>
    <property type="evidence" value="ECO:0007669"/>
    <property type="project" value="UniProtKB-KW"/>
</dbReference>
<sequence length="8" mass="954">VERYAFGL</sequence>
<accession>B3EWJ4</accession>
<comment type="function">
    <text evidence="1">May act as a neurotransmitter or neuromodulator.</text>
</comment>
<comment type="subcellular location">
    <subcellularLocation>
        <location evidence="2">Secreted</location>
    </subcellularLocation>
</comment>
<comment type="tissue specificity">
    <text evidence="4 5">In larvae, expressed in the CNS and midgut but not in the ring gland, thoracic perisymapthetic organs (tPSO) or abdominal perisymapthetic organs (aPSO) (at protein level). In adults, expressed in brain and thoracic-abdominal ganglion but not in corpora cardiaca and corpora allata (at protein level).</text>
</comment>
<comment type="developmental stage">
    <text evidence="4 5">Detected in larvae and adults.</text>
</comment>
<comment type="mass spectrometry" mass="953.5" method="MALDI" evidence="4 5"/>
<comment type="mass spectrometry" mass="953.53" method="MALDI" evidence="4 5"/>
<comment type="similarity">
    <text evidence="3">Belongs to the allatostatin family.</text>
</comment>
<proteinExistence type="evidence at protein level"/>
<reference evidence="6" key="1">
    <citation type="journal article" date="2011" name="Peptides">
        <title>Neuropeptides associated with the central nervous system of the cabbage root fly, Delia radicum (L).</title>
        <authorList>
            <person name="Audsley N."/>
            <person name="Matthews H.J."/>
            <person name="Down R.E."/>
            <person name="Weaver R.J."/>
        </authorList>
    </citation>
    <scope>PROTEIN SEQUENCE</scope>
    <scope>TISSUE SPECIFICITY</scope>
    <scope>MASS SPECTROMETRY</scope>
    <scope>AMIDATION AT LEU-8</scope>
    <source>
        <tissue evidence="4">Abdominal ganglion</tissue>
        <tissue evidence="4">Brain</tissue>
        <tissue evidence="4">Corpora allata</tissue>
        <tissue evidence="4">Corpora cardiaca</tissue>
    </source>
</reference>
<reference evidence="6" key="2">
    <citation type="journal article" date="2012" name="PLoS ONE">
        <title>Peptidomics of the agriculturally damaging larval stage of the cabbage root fly Delia radicum (Diptera: Anthomyiidae).</title>
        <authorList>
            <person name="Zoephel J."/>
            <person name="Reiher W."/>
            <person name="Rexer K.-H."/>
            <person name="Kahnt J."/>
            <person name="Wegener C."/>
        </authorList>
    </citation>
    <scope>PROTEIN SEQUENCE</scope>
    <scope>TISSUE SPECIFICITY</scope>
    <scope>DEVELOPMENTAL STAGE</scope>
    <scope>MASS SPECTROMETRY</scope>
    <scope>AMIDATION AT LEU-8</scope>
    <source>
        <tissue evidence="5">CNS</tissue>
        <tissue evidence="5">Midgut</tissue>
    </source>
</reference>